<feature type="chain" id="PRO_0000321310" description="Argininosuccinate synthase">
    <location>
        <begin position="1"/>
        <end position="401"/>
    </location>
</feature>
<feature type="binding site" evidence="1">
    <location>
        <begin position="7"/>
        <end position="15"/>
    </location>
    <ligand>
        <name>ATP</name>
        <dbReference type="ChEBI" id="CHEBI:30616"/>
    </ligand>
</feature>
<feature type="binding site" evidence="1">
    <location>
        <position position="34"/>
    </location>
    <ligand>
        <name>ATP</name>
        <dbReference type="ChEBI" id="CHEBI:30616"/>
    </ligand>
</feature>
<feature type="binding site" evidence="1">
    <location>
        <position position="85"/>
    </location>
    <ligand>
        <name>L-citrulline</name>
        <dbReference type="ChEBI" id="CHEBI:57743"/>
    </ligand>
</feature>
<feature type="binding site" evidence="1">
    <location>
        <position position="90"/>
    </location>
    <ligand>
        <name>L-citrulline</name>
        <dbReference type="ChEBI" id="CHEBI:57743"/>
    </ligand>
</feature>
<feature type="binding site" evidence="1">
    <location>
        <position position="115"/>
    </location>
    <ligand>
        <name>ATP</name>
        <dbReference type="ChEBI" id="CHEBI:30616"/>
    </ligand>
</feature>
<feature type="binding site" evidence="1">
    <location>
        <position position="117"/>
    </location>
    <ligand>
        <name>L-aspartate</name>
        <dbReference type="ChEBI" id="CHEBI:29991"/>
    </ligand>
</feature>
<feature type="binding site" evidence="1">
    <location>
        <position position="121"/>
    </location>
    <ligand>
        <name>L-aspartate</name>
        <dbReference type="ChEBI" id="CHEBI:29991"/>
    </ligand>
</feature>
<feature type="binding site" evidence="1">
    <location>
        <position position="121"/>
    </location>
    <ligand>
        <name>L-citrulline</name>
        <dbReference type="ChEBI" id="CHEBI:57743"/>
    </ligand>
</feature>
<feature type="binding site" evidence="1">
    <location>
        <position position="122"/>
    </location>
    <ligand>
        <name>L-aspartate</name>
        <dbReference type="ChEBI" id="CHEBI:29991"/>
    </ligand>
</feature>
<feature type="binding site" evidence="1">
    <location>
        <position position="125"/>
    </location>
    <ligand>
        <name>L-citrulline</name>
        <dbReference type="ChEBI" id="CHEBI:57743"/>
    </ligand>
</feature>
<feature type="binding site" evidence="1">
    <location>
        <position position="174"/>
    </location>
    <ligand>
        <name>L-citrulline</name>
        <dbReference type="ChEBI" id="CHEBI:57743"/>
    </ligand>
</feature>
<feature type="binding site" evidence="1">
    <location>
        <position position="183"/>
    </location>
    <ligand>
        <name>L-citrulline</name>
        <dbReference type="ChEBI" id="CHEBI:57743"/>
    </ligand>
</feature>
<feature type="binding site" evidence="1">
    <location>
        <position position="259"/>
    </location>
    <ligand>
        <name>L-citrulline</name>
        <dbReference type="ChEBI" id="CHEBI:57743"/>
    </ligand>
</feature>
<feature type="binding site" evidence="1">
    <location>
        <position position="271"/>
    </location>
    <ligand>
        <name>L-citrulline</name>
        <dbReference type="ChEBI" id="CHEBI:57743"/>
    </ligand>
</feature>
<proteinExistence type="inferred from homology"/>
<keyword id="KW-0028">Amino-acid biosynthesis</keyword>
<keyword id="KW-0055">Arginine biosynthesis</keyword>
<keyword id="KW-0067">ATP-binding</keyword>
<keyword id="KW-0963">Cytoplasm</keyword>
<keyword id="KW-0436">Ligase</keyword>
<keyword id="KW-0547">Nucleotide-binding</keyword>
<keyword id="KW-1185">Reference proteome</keyword>
<accession>A4J173</accession>
<reference key="1">
    <citation type="submission" date="2007-03" db="EMBL/GenBank/DDBJ databases">
        <title>Complete sequence of Desulfotomaculum reducens MI-1.</title>
        <authorList>
            <consortium name="US DOE Joint Genome Institute"/>
            <person name="Copeland A."/>
            <person name="Lucas S."/>
            <person name="Lapidus A."/>
            <person name="Barry K."/>
            <person name="Detter J.C."/>
            <person name="Glavina del Rio T."/>
            <person name="Hammon N."/>
            <person name="Israni S."/>
            <person name="Dalin E."/>
            <person name="Tice H."/>
            <person name="Pitluck S."/>
            <person name="Sims D."/>
            <person name="Brettin T."/>
            <person name="Bruce D."/>
            <person name="Han C."/>
            <person name="Tapia R."/>
            <person name="Schmutz J."/>
            <person name="Larimer F."/>
            <person name="Land M."/>
            <person name="Hauser L."/>
            <person name="Kyrpides N."/>
            <person name="Kim E."/>
            <person name="Tebo B.M."/>
            <person name="Richardson P."/>
        </authorList>
    </citation>
    <scope>NUCLEOTIDE SEQUENCE [LARGE SCALE GENOMIC DNA]</scope>
    <source>
        <strain>ATCC BAA-1160 / DSM 100696 / MI-1</strain>
    </source>
</reference>
<dbReference type="EC" id="6.3.4.5" evidence="1"/>
<dbReference type="EMBL" id="CP000612">
    <property type="protein sequence ID" value="ABO48826.1"/>
    <property type="molecule type" value="Genomic_DNA"/>
</dbReference>
<dbReference type="RefSeq" id="WP_011876664.1">
    <property type="nucleotide sequence ID" value="NC_009253.1"/>
</dbReference>
<dbReference type="SMR" id="A4J173"/>
<dbReference type="STRING" id="349161.Dred_0277"/>
<dbReference type="KEGG" id="drm:Dred_0277"/>
<dbReference type="eggNOG" id="COG0137">
    <property type="taxonomic scope" value="Bacteria"/>
</dbReference>
<dbReference type="HOGENOM" id="CLU_032784_4_2_9"/>
<dbReference type="OrthoDB" id="9801641at2"/>
<dbReference type="UniPathway" id="UPA00068">
    <property type="reaction ID" value="UER00113"/>
</dbReference>
<dbReference type="Proteomes" id="UP000001556">
    <property type="component" value="Chromosome"/>
</dbReference>
<dbReference type="GO" id="GO:0005737">
    <property type="term" value="C:cytoplasm"/>
    <property type="evidence" value="ECO:0007669"/>
    <property type="project" value="UniProtKB-SubCell"/>
</dbReference>
<dbReference type="GO" id="GO:0004055">
    <property type="term" value="F:argininosuccinate synthase activity"/>
    <property type="evidence" value="ECO:0007669"/>
    <property type="project" value="UniProtKB-UniRule"/>
</dbReference>
<dbReference type="GO" id="GO:0005524">
    <property type="term" value="F:ATP binding"/>
    <property type="evidence" value="ECO:0007669"/>
    <property type="project" value="UniProtKB-UniRule"/>
</dbReference>
<dbReference type="GO" id="GO:0000053">
    <property type="term" value="P:argininosuccinate metabolic process"/>
    <property type="evidence" value="ECO:0007669"/>
    <property type="project" value="TreeGrafter"/>
</dbReference>
<dbReference type="GO" id="GO:0006526">
    <property type="term" value="P:L-arginine biosynthetic process"/>
    <property type="evidence" value="ECO:0007669"/>
    <property type="project" value="UniProtKB-UniRule"/>
</dbReference>
<dbReference type="GO" id="GO:0000050">
    <property type="term" value="P:urea cycle"/>
    <property type="evidence" value="ECO:0007669"/>
    <property type="project" value="TreeGrafter"/>
</dbReference>
<dbReference type="CDD" id="cd01999">
    <property type="entry name" value="ASS"/>
    <property type="match status" value="1"/>
</dbReference>
<dbReference type="FunFam" id="3.40.50.620:FF:000019">
    <property type="entry name" value="Argininosuccinate synthase"/>
    <property type="match status" value="1"/>
</dbReference>
<dbReference type="FunFam" id="3.90.1260.10:FF:000007">
    <property type="entry name" value="Argininosuccinate synthase"/>
    <property type="match status" value="1"/>
</dbReference>
<dbReference type="Gene3D" id="3.90.1260.10">
    <property type="entry name" value="Argininosuccinate synthetase, chain A, domain 2"/>
    <property type="match status" value="1"/>
</dbReference>
<dbReference type="Gene3D" id="3.40.50.620">
    <property type="entry name" value="HUPs"/>
    <property type="match status" value="1"/>
</dbReference>
<dbReference type="Gene3D" id="1.20.5.470">
    <property type="entry name" value="Single helix bin"/>
    <property type="match status" value="1"/>
</dbReference>
<dbReference type="HAMAP" id="MF_00005">
    <property type="entry name" value="Arg_succ_synth_type1"/>
    <property type="match status" value="1"/>
</dbReference>
<dbReference type="InterPro" id="IPR048268">
    <property type="entry name" value="Arginosuc_syn_C"/>
</dbReference>
<dbReference type="InterPro" id="IPR048267">
    <property type="entry name" value="Arginosuc_syn_N"/>
</dbReference>
<dbReference type="InterPro" id="IPR001518">
    <property type="entry name" value="Arginosuc_synth"/>
</dbReference>
<dbReference type="InterPro" id="IPR018223">
    <property type="entry name" value="Arginosuc_synth_CS"/>
</dbReference>
<dbReference type="InterPro" id="IPR023434">
    <property type="entry name" value="Arginosuc_synth_type_1_subfam"/>
</dbReference>
<dbReference type="InterPro" id="IPR024074">
    <property type="entry name" value="AS_cat/multimer_dom_body"/>
</dbReference>
<dbReference type="InterPro" id="IPR014729">
    <property type="entry name" value="Rossmann-like_a/b/a_fold"/>
</dbReference>
<dbReference type="NCBIfam" id="TIGR00032">
    <property type="entry name" value="argG"/>
    <property type="match status" value="1"/>
</dbReference>
<dbReference type="NCBIfam" id="NF001770">
    <property type="entry name" value="PRK00509.1"/>
    <property type="match status" value="1"/>
</dbReference>
<dbReference type="PANTHER" id="PTHR11587">
    <property type="entry name" value="ARGININOSUCCINATE SYNTHASE"/>
    <property type="match status" value="1"/>
</dbReference>
<dbReference type="PANTHER" id="PTHR11587:SF2">
    <property type="entry name" value="ARGININOSUCCINATE SYNTHASE"/>
    <property type="match status" value="1"/>
</dbReference>
<dbReference type="Pfam" id="PF20979">
    <property type="entry name" value="Arginosuc_syn_C"/>
    <property type="match status" value="1"/>
</dbReference>
<dbReference type="Pfam" id="PF00764">
    <property type="entry name" value="Arginosuc_synth"/>
    <property type="match status" value="1"/>
</dbReference>
<dbReference type="SUPFAM" id="SSF52402">
    <property type="entry name" value="Adenine nucleotide alpha hydrolases-like"/>
    <property type="match status" value="1"/>
</dbReference>
<dbReference type="SUPFAM" id="SSF69864">
    <property type="entry name" value="Argininosuccinate synthetase, C-terminal domain"/>
    <property type="match status" value="1"/>
</dbReference>
<dbReference type="PROSITE" id="PS00564">
    <property type="entry name" value="ARGININOSUCCIN_SYN_1"/>
    <property type="match status" value="1"/>
</dbReference>
<dbReference type="PROSITE" id="PS00565">
    <property type="entry name" value="ARGININOSUCCIN_SYN_2"/>
    <property type="match status" value="1"/>
</dbReference>
<evidence type="ECO:0000255" key="1">
    <source>
        <dbReference type="HAMAP-Rule" id="MF_00005"/>
    </source>
</evidence>
<organism>
    <name type="scientific">Desulforamulus reducens (strain ATCC BAA-1160 / DSM 100696 / MI-1)</name>
    <name type="common">Desulfotomaculum reducens</name>
    <dbReference type="NCBI Taxonomy" id="349161"/>
    <lineage>
        <taxon>Bacteria</taxon>
        <taxon>Bacillati</taxon>
        <taxon>Bacillota</taxon>
        <taxon>Clostridia</taxon>
        <taxon>Eubacteriales</taxon>
        <taxon>Peptococcaceae</taxon>
        <taxon>Desulforamulus</taxon>
    </lineage>
</organism>
<comment type="catalytic activity">
    <reaction evidence="1">
        <text>L-citrulline + L-aspartate + ATP = 2-(N(omega)-L-arginino)succinate + AMP + diphosphate + H(+)</text>
        <dbReference type="Rhea" id="RHEA:10932"/>
        <dbReference type="ChEBI" id="CHEBI:15378"/>
        <dbReference type="ChEBI" id="CHEBI:29991"/>
        <dbReference type="ChEBI" id="CHEBI:30616"/>
        <dbReference type="ChEBI" id="CHEBI:33019"/>
        <dbReference type="ChEBI" id="CHEBI:57472"/>
        <dbReference type="ChEBI" id="CHEBI:57743"/>
        <dbReference type="ChEBI" id="CHEBI:456215"/>
        <dbReference type="EC" id="6.3.4.5"/>
    </reaction>
</comment>
<comment type="pathway">
    <text evidence="1">Amino-acid biosynthesis; L-arginine biosynthesis; L-arginine from L-ornithine and carbamoyl phosphate: step 2/3.</text>
</comment>
<comment type="subunit">
    <text evidence="1">Homotetramer.</text>
</comment>
<comment type="subcellular location">
    <subcellularLocation>
        <location evidence="1">Cytoplasm</location>
    </subcellularLocation>
</comment>
<comment type="similarity">
    <text evidence="1">Belongs to the argininosuccinate synthase family. Type 1 subfamily.</text>
</comment>
<gene>
    <name evidence="1" type="primary">argG</name>
    <name type="ordered locus">Dred_0277</name>
</gene>
<sequence>MPKVVLAYSGGLDTSVIIAWLKENYGYEVIAVTADLGQGEELAPLEEKALQSGASKIYIEDLRKEFVEDYIWPTLKAGAIYEGKYLLGTSFARPLIAKKLVEIAEKEGAVAVAHGATGKGNDQVRFELGVKALAPHLKVIAPWREWDIRSREDAIDYAEARGIPVPVTKKSIYSRDRNIWHISHEGGELESPANAASYDMLMLTVPPEKAPDQPTYVEIGFEKGIPVSINGELMDSIGLLEKLNVIGGENGIGIVDMVENRLVGMKSRGVYETPGGAILVYAHRELELLTLDRATLHYKEQIALRYAELVYDGVWFAPLREALDAFVDNTQRTVTGTVKLKLYKGNMMPAGVTSPYSLYDEELSTFGRDEVYNQADAAGFINLFGLPLKVRAMMEKKAGLR</sequence>
<protein>
    <recommendedName>
        <fullName evidence="1">Argininosuccinate synthase</fullName>
        <ecNumber evidence="1">6.3.4.5</ecNumber>
    </recommendedName>
    <alternativeName>
        <fullName evidence="1">Citrulline--aspartate ligase</fullName>
    </alternativeName>
</protein>
<name>ASSY_DESRM</name>